<accession>O68940</accession>
<organism>
    <name type="scientific">Rhodospirillum rubrum</name>
    <dbReference type="NCBI Taxonomy" id="1085"/>
    <lineage>
        <taxon>Bacteria</taxon>
        <taxon>Pseudomonadati</taxon>
        <taxon>Pseudomonadota</taxon>
        <taxon>Alphaproteobacteria</taxon>
        <taxon>Rhodospirillales</taxon>
        <taxon>Rhodospirillaceae</taxon>
        <taxon>Rhodospirillum</taxon>
    </lineage>
</organism>
<keyword id="KW-0067">ATP-binding</keyword>
<keyword id="KW-0408">Iron</keyword>
<keyword id="KW-0411">Iron-sulfur</keyword>
<keyword id="KW-0479">Metal-binding</keyword>
<keyword id="KW-0535">Nitrogen fixation</keyword>
<keyword id="KW-0547">Nucleotide-binding</keyword>
<keyword id="KW-0560">Oxidoreductase</keyword>
<reference key="1">
    <citation type="journal article" date="1999" name="Can. J. Microbiol.">
        <title>Identification of genes unique to Mo-independent nitrogenase systems in diverse diazotrophs.</title>
        <authorList>
            <person name="Loveless T.M."/>
            <person name="Bishop P.E."/>
        </authorList>
    </citation>
    <scope>NUCLEOTIDE SEQUENCE [GENOMIC DNA]</scope>
</reference>
<dbReference type="EC" id="1.18.6.1"/>
<dbReference type="EMBL" id="AF058778">
    <property type="protein sequence ID" value="AAC14326.1"/>
    <property type="molecule type" value="Genomic_DNA"/>
</dbReference>
<dbReference type="RefSeq" id="WP_011389147.1">
    <property type="nucleotide sequence ID" value="NZ_DAMDTZ010000314.1"/>
</dbReference>
<dbReference type="SMR" id="O68940"/>
<dbReference type="OMA" id="CYWVDAV"/>
<dbReference type="GO" id="GO:0005524">
    <property type="term" value="F:ATP binding"/>
    <property type="evidence" value="ECO:0007669"/>
    <property type="project" value="UniProtKB-KW"/>
</dbReference>
<dbReference type="GO" id="GO:0005506">
    <property type="term" value="F:iron ion binding"/>
    <property type="evidence" value="ECO:0007669"/>
    <property type="project" value="InterPro"/>
</dbReference>
<dbReference type="GO" id="GO:0051536">
    <property type="term" value="F:iron-sulfur cluster binding"/>
    <property type="evidence" value="ECO:0007669"/>
    <property type="project" value="UniProtKB-KW"/>
</dbReference>
<dbReference type="GO" id="GO:0016163">
    <property type="term" value="F:nitrogenase activity"/>
    <property type="evidence" value="ECO:0007669"/>
    <property type="project" value="UniProtKB-EC"/>
</dbReference>
<dbReference type="GO" id="GO:0009399">
    <property type="term" value="P:nitrogen fixation"/>
    <property type="evidence" value="ECO:0007669"/>
    <property type="project" value="UniProtKB-KW"/>
</dbReference>
<dbReference type="InterPro" id="IPR014278">
    <property type="entry name" value="Nase_Fe-Fe_dsu"/>
</dbReference>
<dbReference type="InterPro" id="IPR004349">
    <property type="entry name" value="V/Nase_d_su"/>
</dbReference>
<dbReference type="NCBIfam" id="TIGR02929">
    <property type="entry name" value="anfG_nitrog"/>
    <property type="match status" value="1"/>
</dbReference>
<dbReference type="Pfam" id="PF03139">
    <property type="entry name" value="AnfG_VnfG"/>
    <property type="match status" value="1"/>
</dbReference>
<sequence length="116" mass="13673">MDDLMKDRIDLLIDYIMKHCLWQFHSRSWDRKRQNEGILTKTTQLLCDEPVDLGTPADKCYWVDAVCLADAYKSRYPWLKTMDKDDIKALMGALHERLDHLTITGSLNLELTDQHY</sequence>
<proteinExistence type="inferred from homology"/>
<comment type="function">
    <text>The key enzymatic reactions in nitrogen fixation are catalyzed by the nitrogenase complex, which has 2 components: the iron protein (component 2) and a component 1 which is either a molybdenum-iron protein, a vanadium-iron, or an iron-iron protein.</text>
</comment>
<comment type="catalytic activity">
    <reaction>
        <text>N2 + 8 reduced [2Fe-2S]-[ferredoxin] + 16 ATP + 16 H2O = H2 + 8 oxidized [2Fe-2S]-[ferredoxin] + 2 NH4(+) + 16 ADP + 16 phosphate + 6 H(+)</text>
        <dbReference type="Rhea" id="RHEA:21448"/>
        <dbReference type="Rhea" id="RHEA-COMP:10000"/>
        <dbReference type="Rhea" id="RHEA-COMP:10001"/>
        <dbReference type="ChEBI" id="CHEBI:15377"/>
        <dbReference type="ChEBI" id="CHEBI:15378"/>
        <dbReference type="ChEBI" id="CHEBI:17997"/>
        <dbReference type="ChEBI" id="CHEBI:18276"/>
        <dbReference type="ChEBI" id="CHEBI:28938"/>
        <dbReference type="ChEBI" id="CHEBI:30616"/>
        <dbReference type="ChEBI" id="CHEBI:33737"/>
        <dbReference type="ChEBI" id="CHEBI:33738"/>
        <dbReference type="ChEBI" id="CHEBI:43474"/>
        <dbReference type="ChEBI" id="CHEBI:456216"/>
        <dbReference type="EC" id="1.18.6.1"/>
    </reaction>
</comment>
<comment type="cofactor">
    <cofactor evidence="1">
        <name>iron-sulfur cluster</name>
        <dbReference type="ChEBI" id="CHEBI:30408"/>
    </cofactor>
</comment>
<comment type="subunit">
    <text evidence="1">Hexamer of two alpha, two beta, and two delta chains.</text>
</comment>
<protein>
    <recommendedName>
        <fullName>Nitrogenase iron-iron protein delta chain</fullName>
        <ecNumber>1.18.6.1</ecNumber>
    </recommendedName>
    <alternativeName>
        <fullName>Dinitrogenase 3 subunit delta</fullName>
    </alternativeName>
    <alternativeName>
        <fullName>Nitrogenase component I</fullName>
    </alternativeName>
</protein>
<evidence type="ECO:0000250" key="1"/>
<name>ANFG_RHORU</name>
<feature type="chain" id="PRO_0000213568" description="Nitrogenase iron-iron protein delta chain">
    <location>
        <begin position="1"/>
        <end position="116"/>
    </location>
</feature>
<gene>
    <name type="primary">anfG</name>
</gene>